<reference key="1">
    <citation type="journal article" date="1996" name="DNA Res.">
        <title>A 570-kb DNA sequence of the Escherichia coli K-12 genome corresponding to the 28.0-40.1 min region on the linkage map.</title>
        <authorList>
            <person name="Aiba H."/>
            <person name="Baba T."/>
            <person name="Fujita K."/>
            <person name="Hayashi K."/>
            <person name="Inada T."/>
            <person name="Isono K."/>
            <person name="Itoh T."/>
            <person name="Kasai H."/>
            <person name="Kashimoto K."/>
            <person name="Kimura S."/>
            <person name="Kitakawa M."/>
            <person name="Kitagawa M."/>
            <person name="Makino K."/>
            <person name="Miki T."/>
            <person name="Mizobuchi K."/>
            <person name="Mori H."/>
            <person name="Mori T."/>
            <person name="Motomura K."/>
            <person name="Nakade S."/>
            <person name="Nakamura Y."/>
            <person name="Nashimoto H."/>
            <person name="Nishio Y."/>
            <person name="Oshima T."/>
            <person name="Saito N."/>
            <person name="Sampei G."/>
            <person name="Seki Y."/>
            <person name="Sivasundaram S."/>
            <person name="Tagami H."/>
            <person name="Takeda J."/>
            <person name="Takemoto K."/>
            <person name="Takeuchi Y."/>
            <person name="Wada C."/>
            <person name="Yamamoto Y."/>
            <person name="Horiuchi T."/>
        </authorList>
    </citation>
    <scope>NUCLEOTIDE SEQUENCE [LARGE SCALE GENOMIC DNA]</scope>
    <source>
        <strain>K12 / W3110 / ATCC 27325 / DSM 5911</strain>
    </source>
</reference>
<reference key="2">
    <citation type="journal article" date="1996" name="DNA Res.">
        <title>A 460-kb DNA sequence of the Escherichia coli K-12 genome corresponding to the 40.1-50.0 min region on the linkage map.</title>
        <authorList>
            <person name="Itoh T."/>
            <person name="Aiba H."/>
            <person name="Baba T."/>
            <person name="Fujita K."/>
            <person name="Hayashi K."/>
            <person name="Inada T."/>
            <person name="Isono K."/>
            <person name="Kasai H."/>
            <person name="Kimura S."/>
            <person name="Kitakawa M."/>
            <person name="Kitagawa M."/>
            <person name="Makino K."/>
            <person name="Miki T."/>
            <person name="Mizobuchi K."/>
            <person name="Mori H."/>
            <person name="Mori T."/>
            <person name="Motomura K."/>
            <person name="Nakade S."/>
            <person name="Nakamura Y."/>
            <person name="Nashimoto H."/>
            <person name="Nishio Y."/>
            <person name="Oshima T."/>
            <person name="Saito N."/>
            <person name="Sampei G."/>
            <person name="Seki Y."/>
            <person name="Sivasundaram S."/>
            <person name="Tagami H."/>
            <person name="Takeda J."/>
            <person name="Takemoto K."/>
            <person name="Wada C."/>
            <person name="Yamamoto Y."/>
            <person name="Horiuchi T."/>
        </authorList>
    </citation>
    <scope>NUCLEOTIDE SEQUENCE [LARGE SCALE GENOMIC DNA]</scope>
    <source>
        <strain>K12 / W3110 / ATCC 27325 / DSM 5911</strain>
    </source>
</reference>
<reference key="3">
    <citation type="journal article" date="2006" name="Mol. Syst. Biol.">
        <title>Highly accurate genome sequences of Escherichia coli K-12 strains MG1655 and W3110.</title>
        <authorList>
            <person name="Hayashi K."/>
            <person name="Morooka N."/>
            <person name="Yamamoto Y."/>
            <person name="Fujita K."/>
            <person name="Isono K."/>
            <person name="Choi S."/>
            <person name="Ohtsubo E."/>
            <person name="Baba T."/>
            <person name="Wanner B.L."/>
            <person name="Mori H."/>
            <person name="Horiuchi T."/>
        </authorList>
    </citation>
    <scope>NUCLEOTIDE SEQUENCE [LARGE SCALE GENOMIC DNA]</scope>
    <source>
        <strain>K12 / W3110 / ATCC 27325 / DSM 5911</strain>
    </source>
</reference>
<keyword id="KW-0233">DNA recombination</keyword>
<keyword id="KW-0238">DNA-binding</keyword>
<keyword id="KW-0814">Transposable element</keyword>
<keyword id="KW-0815">Transposition</keyword>
<sequence>MSHQLTFADSEFSSKRRQTRKEIFLSRMEQILPWQNMVEVIEPFYPKAGNGRRPYPLETMLRIHCMQHWYNLSDGAMEDALYEIASMRLFARLSLDSALPDRTTIMNFRHLLEQHQLARQLFKTINRWLAEAGVMMTQGTLVDATIIEAPSSTKNKEQQRDPEMHQTKKGNQWHFGMKAHIGVDAKSGLTHSLVTTAANEHDLNQLGNLLHGEEQFVSADAGYQGAPQREELAEVDVDWLIAERPGKVRTLKQHPRKNKTAINIEYMKASIRARVEHPFRIIKRQFGFVKARYKGLLKNDNQLAMLFTLANLFRADQMIRQWERSH</sequence>
<dbReference type="EMBL" id="AP009048">
    <property type="protein sequence ID" value="BAE77585.1"/>
    <property type="molecule type" value="Genomic_DNA"/>
</dbReference>
<dbReference type="RefSeq" id="WP_000019403.1">
    <property type="nucleotide sequence ID" value="NZ_SSZK01000120.1"/>
</dbReference>
<dbReference type="KEGG" id="ecj:JW5936"/>
<dbReference type="KEGG" id="ecoc:C3026_01250"/>
<dbReference type="KEGG" id="ecoc:C3026_02730"/>
<dbReference type="KEGG" id="ecoc:C3026_03280"/>
<dbReference type="KEGG" id="ecoc:C3026_07795"/>
<dbReference type="KEGG" id="ecoc:C3026_10760"/>
<dbReference type="KEGG" id="ecoc:C3026_11440"/>
<dbReference type="KEGG" id="ecoc:C3026_12250"/>
<dbReference type="KEGG" id="ecoc:C3026_16315"/>
<dbReference type="KEGG" id="ecoc:C3026_17505"/>
<dbReference type="KEGG" id="ecoc:C3026_18985"/>
<dbReference type="KEGG" id="ecoc:C3026_23975"/>
<dbReference type="HOGENOM" id="CLU_049873_1_2_6"/>
<dbReference type="PhylomeDB" id="P0CE64"/>
<dbReference type="PRO" id="PR:P0CE64"/>
<dbReference type="GO" id="GO:0003677">
    <property type="term" value="F:DNA binding"/>
    <property type="evidence" value="ECO:0007669"/>
    <property type="project" value="UniProtKB-KW"/>
</dbReference>
<dbReference type="GO" id="GO:0004803">
    <property type="term" value="F:transposase activity"/>
    <property type="evidence" value="ECO:0007669"/>
    <property type="project" value="InterPro"/>
</dbReference>
<dbReference type="GO" id="GO:0006313">
    <property type="term" value="P:DNA transposition"/>
    <property type="evidence" value="ECO:0007669"/>
    <property type="project" value="InterPro"/>
</dbReference>
<dbReference type="InterPro" id="IPR047959">
    <property type="entry name" value="Transpos_IS5"/>
</dbReference>
<dbReference type="InterPro" id="IPR002559">
    <property type="entry name" value="Transposase_11"/>
</dbReference>
<dbReference type="InterPro" id="IPR008490">
    <property type="entry name" value="Transposase_InsH_N"/>
</dbReference>
<dbReference type="NCBIfam" id="NF033581">
    <property type="entry name" value="transpos_IS5_4"/>
    <property type="match status" value="1"/>
</dbReference>
<dbReference type="PANTHER" id="PTHR35604">
    <property type="entry name" value="TRANSPOSASE INSH FOR INSERTION SEQUENCE ELEMENT IS5A-RELATED"/>
    <property type="match status" value="1"/>
</dbReference>
<dbReference type="PANTHER" id="PTHR35604:SF2">
    <property type="entry name" value="TRANSPOSASE INSH FOR INSERTION SEQUENCE ELEMENT IS5A-RELATED"/>
    <property type="match status" value="1"/>
</dbReference>
<dbReference type="Pfam" id="PF01609">
    <property type="entry name" value="DDE_Tnp_1"/>
    <property type="match status" value="1"/>
</dbReference>
<dbReference type="Pfam" id="PF05598">
    <property type="entry name" value="DUF772"/>
    <property type="match status" value="1"/>
</dbReference>
<organism>
    <name type="scientific">Escherichia coli (strain K12)</name>
    <dbReference type="NCBI Taxonomy" id="83333"/>
    <lineage>
        <taxon>Bacteria</taxon>
        <taxon>Pseudomonadati</taxon>
        <taxon>Pseudomonadota</taxon>
        <taxon>Gammaproteobacteria</taxon>
        <taxon>Enterobacterales</taxon>
        <taxon>Enterobacteriaceae</taxon>
        <taxon>Escherichia</taxon>
    </lineage>
</organism>
<name>INH17_ECOLI</name>
<protein>
    <recommendedName>
        <fullName>Transposase InsH for insertion sequence element IS5-17</fullName>
    </recommendedName>
</protein>
<proteinExistence type="inferred from homology"/>
<comment type="function">
    <text>Involved in the transposition of the insertion sequence IS5.</text>
</comment>
<comment type="similarity">
    <text evidence="1">Belongs to the transposase 11 family.</text>
</comment>
<comment type="caution">
    <text evidence="1">There is no equivalent of this gene in strain K12 / MG1655.</text>
</comment>
<accession>P0CE64</accession>
<accession>O07987</accession>
<accession>O07988</accession>
<accession>P03837</accession>
<accession>P76355</accession>
<accession>Q2MBK1</accession>
<accession>Q2MBM8</accession>
<evidence type="ECO:0000305" key="1"/>
<feature type="chain" id="PRO_0000392495" description="Transposase InsH for insertion sequence element IS5-17">
    <location>
        <begin position="1"/>
        <end position="326"/>
    </location>
</feature>
<gene>
    <name type="ordered locus">JW5936</name>
</gene>